<protein>
    <recommendedName>
        <fullName evidence="1">Nucleoside diphosphate kinase</fullName>
        <shortName evidence="1">NDK</shortName>
        <shortName evidence="1">NDP kinase</shortName>
        <ecNumber evidence="1">2.7.4.6</ecNumber>
    </recommendedName>
    <alternativeName>
        <fullName evidence="1">Nucleoside-2-P kinase</fullName>
    </alternativeName>
</protein>
<evidence type="ECO:0000255" key="1">
    <source>
        <dbReference type="HAMAP-Rule" id="MF_00451"/>
    </source>
</evidence>
<gene>
    <name evidence="1" type="primary">ndk</name>
    <name type="ordered locus">NSE_0560</name>
</gene>
<feature type="chain" id="PRO_0000242503" description="Nucleoside diphosphate kinase">
    <location>
        <begin position="1"/>
        <end position="139"/>
    </location>
</feature>
<feature type="active site" description="Pros-phosphohistidine intermediate" evidence="1">
    <location>
        <position position="115"/>
    </location>
</feature>
<feature type="binding site" evidence="1">
    <location>
        <position position="9"/>
    </location>
    <ligand>
        <name>ATP</name>
        <dbReference type="ChEBI" id="CHEBI:30616"/>
    </ligand>
</feature>
<feature type="binding site" evidence="1">
    <location>
        <position position="57"/>
    </location>
    <ligand>
        <name>ATP</name>
        <dbReference type="ChEBI" id="CHEBI:30616"/>
    </ligand>
</feature>
<feature type="binding site" evidence="1">
    <location>
        <position position="85"/>
    </location>
    <ligand>
        <name>ATP</name>
        <dbReference type="ChEBI" id="CHEBI:30616"/>
    </ligand>
</feature>
<feature type="binding site" evidence="1">
    <location>
        <position position="91"/>
    </location>
    <ligand>
        <name>ATP</name>
        <dbReference type="ChEBI" id="CHEBI:30616"/>
    </ligand>
</feature>
<feature type="binding site" evidence="1">
    <location>
        <position position="102"/>
    </location>
    <ligand>
        <name>ATP</name>
        <dbReference type="ChEBI" id="CHEBI:30616"/>
    </ligand>
</feature>
<feature type="binding site" evidence="1">
    <location>
        <position position="112"/>
    </location>
    <ligand>
        <name>ATP</name>
        <dbReference type="ChEBI" id="CHEBI:30616"/>
    </ligand>
</feature>
<dbReference type="EC" id="2.7.4.6" evidence="1"/>
<dbReference type="EMBL" id="CP000237">
    <property type="protein sequence ID" value="ABD46370.1"/>
    <property type="molecule type" value="Genomic_DNA"/>
</dbReference>
<dbReference type="RefSeq" id="WP_011451948.1">
    <property type="nucleotide sequence ID" value="NC_007798.1"/>
</dbReference>
<dbReference type="SMR" id="Q2GDK4"/>
<dbReference type="STRING" id="222891.NSE_0560"/>
<dbReference type="KEGG" id="nse:NSE_0560"/>
<dbReference type="eggNOG" id="COG0105">
    <property type="taxonomic scope" value="Bacteria"/>
</dbReference>
<dbReference type="HOGENOM" id="CLU_060216_8_1_5"/>
<dbReference type="OrthoDB" id="9801161at2"/>
<dbReference type="Proteomes" id="UP000001942">
    <property type="component" value="Chromosome"/>
</dbReference>
<dbReference type="GO" id="GO:0005737">
    <property type="term" value="C:cytoplasm"/>
    <property type="evidence" value="ECO:0007669"/>
    <property type="project" value="UniProtKB-SubCell"/>
</dbReference>
<dbReference type="GO" id="GO:0005524">
    <property type="term" value="F:ATP binding"/>
    <property type="evidence" value="ECO:0007669"/>
    <property type="project" value="UniProtKB-UniRule"/>
</dbReference>
<dbReference type="GO" id="GO:0046872">
    <property type="term" value="F:metal ion binding"/>
    <property type="evidence" value="ECO:0007669"/>
    <property type="project" value="UniProtKB-KW"/>
</dbReference>
<dbReference type="GO" id="GO:0004550">
    <property type="term" value="F:nucleoside diphosphate kinase activity"/>
    <property type="evidence" value="ECO:0007669"/>
    <property type="project" value="UniProtKB-UniRule"/>
</dbReference>
<dbReference type="GO" id="GO:0006241">
    <property type="term" value="P:CTP biosynthetic process"/>
    <property type="evidence" value="ECO:0007669"/>
    <property type="project" value="UniProtKB-UniRule"/>
</dbReference>
<dbReference type="GO" id="GO:0006183">
    <property type="term" value="P:GTP biosynthetic process"/>
    <property type="evidence" value="ECO:0007669"/>
    <property type="project" value="UniProtKB-UniRule"/>
</dbReference>
<dbReference type="GO" id="GO:0006228">
    <property type="term" value="P:UTP biosynthetic process"/>
    <property type="evidence" value="ECO:0007669"/>
    <property type="project" value="UniProtKB-UniRule"/>
</dbReference>
<dbReference type="CDD" id="cd04413">
    <property type="entry name" value="NDPk_I"/>
    <property type="match status" value="1"/>
</dbReference>
<dbReference type="FunFam" id="3.30.70.141:FF:000003">
    <property type="entry name" value="Nucleoside diphosphate kinase"/>
    <property type="match status" value="1"/>
</dbReference>
<dbReference type="Gene3D" id="3.30.70.141">
    <property type="entry name" value="Nucleoside diphosphate kinase-like domain"/>
    <property type="match status" value="1"/>
</dbReference>
<dbReference type="HAMAP" id="MF_00451">
    <property type="entry name" value="NDP_kinase"/>
    <property type="match status" value="1"/>
</dbReference>
<dbReference type="InterPro" id="IPR034907">
    <property type="entry name" value="NDK-like_dom"/>
</dbReference>
<dbReference type="InterPro" id="IPR036850">
    <property type="entry name" value="NDK-like_dom_sf"/>
</dbReference>
<dbReference type="InterPro" id="IPR001564">
    <property type="entry name" value="Nucleoside_diP_kinase"/>
</dbReference>
<dbReference type="InterPro" id="IPR023005">
    <property type="entry name" value="Nucleoside_diP_kinase_AS"/>
</dbReference>
<dbReference type="NCBIfam" id="NF001908">
    <property type="entry name" value="PRK00668.1"/>
    <property type="match status" value="1"/>
</dbReference>
<dbReference type="PANTHER" id="PTHR46161">
    <property type="entry name" value="NUCLEOSIDE DIPHOSPHATE KINASE"/>
    <property type="match status" value="1"/>
</dbReference>
<dbReference type="PANTHER" id="PTHR46161:SF3">
    <property type="entry name" value="NUCLEOSIDE DIPHOSPHATE KINASE DDB_G0292928-RELATED"/>
    <property type="match status" value="1"/>
</dbReference>
<dbReference type="Pfam" id="PF00334">
    <property type="entry name" value="NDK"/>
    <property type="match status" value="1"/>
</dbReference>
<dbReference type="PRINTS" id="PR01243">
    <property type="entry name" value="NUCDPKINASE"/>
</dbReference>
<dbReference type="SMART" id="SM00562">
    <property type="entry name" value="NDK"/>
    <property type="match status" value="1"/>
</dbReference>
<dbReference type="SUPFAM" id="SSF54919">
    <property type="entry name" value="Nucleoside diphosphate kinase, NDK"/>
    <property type="match status" value="1"/>
</dbReference>
<dbReference type="PROSITE" id="PS00469">
    <property type="entry name" value="NDPK"/>
    <property type="match status" value="1"/>
</dbReference>
<dbReference type="PROSITE" id="PS51374">
    <property type="entry name" value="NDPK_LIKE"/>
    <property type="match status" value="1"/>
</dbReference>
<sequence length="139" mass="15671">MKRTLSILKPDVISRNITGKVNAYIEAAGLQIIAMKQLHLTRIQAEAFYVVHKDRFFFNDLVNFMTSAPVIVQVLSGDDAVHRYRKLMGDTDPKKAAKGTIRGDFAESIDANCVHGSDSEENAKNEIAFFFSRCEIFDR</sequence>
<proteinExistence type="inferred from homology"/>
<name>NDK_NEOSM</name>
<comment type="function">
    <text evidence="1">Major role in the synthesis of nucleoside triphosphates other than ATP. The ATP gamma phosphate is transferred to the NDP beta phosphate via a ping-pong mechanism, using a phosphorylated active-site intermediate.</text>
</comment>
<comment type="catalytic activity">
    <reaction evidence="1">
        <text>a 2'-deoxyribonucleoside 5'-diphosphate + ATP = a 2'-deoxyribonucleoside 5'-triphosphate + ADP</text>
        <dbReference type="Rhea" id="RHEA:44640"/>
        <dbReference type="ChEBI" id="CHEBI:30616"/>
        <dbReference type="ChEBI" id="CHEBI:61560"/>
        <dbReference type="ChEBI" id="CHEBI:73316"/>
        <dbReference type="ChEBI" id="CHEBI:456216"/>
        <dbReference type="EC" id="2.7.4.6"/>
    </reaction>
</comment>
<comment type="catalytic activity">
    <reaction evidence="1">
        <text>a ribonucleoside 5'-diphosphate + ATP = a ribonucleoside 5'-triphosphate + ADP</text>
        <dbReference type="Rhea" id="RHEA:18113"/>
        <dbReference type="ChEBI" id="CHEBI:30616"/>
        <dbReference type="ChEBI" id="CHEBI:57930"/>
        <dbReference type="ChEBI" id="CHEBI:61557"/>
        <dbReference type="ChEBI" id="CHEBI:456216"/>
        <dbReference type="EC" id="2.7.4.6"/>
    </reaction>
</comment>
<comment type="cofactor">
    <cofactor evidence="1">
        <name>Mg(2+)</name>
        <dbReference type="ChEBI" id="CHEBI:18420"/>
    </cofactor>
</comment>
<comment type="subunit">
    <text evidence="1">Homotetramer.</text>
</comment>
<comment type="subcellular location">
    <subcellularLocation>
        <location evidence="1">Cytoplasm</location>
    </subcellularLocation>
</comment>
<comment type="similarity">
    <text evidence="1">Belongs to the NDK family.</text>
</comment>
<reference key="1">
    <citation type="journal article" date="2006" name="PLoS Genet.">
        <title>Comparative genomics of emerging human ehrlichiosis agents.</title>
        <authorList>
            <person name="Dunning Hotopp J.C."/>
            <person name="Lin M."/>
            <person name="Madupu R."/>
            <person name="Crabtree J."/>
            <person name="Angiuoli S.V."/>
            <person name="Eisen J.A."/>
            <person name="Seshadri R."/>
            <person name="Ren Q."/>
            <person name="Wu M."/>
            <person name="Utterback T.R."/>
            <person name="Smith S."/>
            <person name="Lewis M."/>
            <person name="Khouri H."/>
            <person name="Zhang C."/>
            <person name="Niu H."/>
            <person name="Lin Q."/>
            <person name="Ohashi N."/>
            <person name="Zhi N."/>
            <person name="Nelson W.C."/>
            <person name="Brinkac L.M."/>
            <person name="Dodson R.J."/>
            <person name="Rosovitz M.J."/>
            <person name="Sundaram J.P."/>
            <person name="Daugherty S.C."/>
            <person name="Davidsen T."/>
            <person name="Durkin A.S."/>
            <person name="Gwinn M.L."/>
            <person name="Haft D.H."/>
            <person name="Selengut J.D."/>
            <person name="Sullivan S.A."/>
            <person name="Zafar N."/>
            <person name="Zhou L."/>
            <person name="Benahmed F."/>
            <person name="Forberger H."/>
            <person name="Halpin R."/>
            <person name="Mulligan S."/>
            <person name="Robinson J."/>
            <person name="White O."/>
            <person name="Rikihisa Y."/>
            <person name="Tettelin H."/>
        </authorList>
    </citation>
    <scope>NUCLEOTIDE SEQUENCE [LARGE SCALE GENOMIC DNA]</scope>
    <source>
        <strain>ATCC VR-367 / Miyayama</strain>
    </source>
</reference>
<keyword id="KW-0067">ATP-binding</keyword>
<keyword id="KW-0963">Cytoplasm</keyword>
<keyword id="KW-0418">Kinase</keyword>
<keyword id="KW-0460">Magnesium</keyword>
<keyword id="KW-0479">Metal-binding</keyword>
<keyword id="KW-0546">Nucleotide metabolism</keyword>
<keyword id="KW-0547">Nucleotide-binding</keyword>
<keyword id="KW-0597">Phosphoprotein</keyword>
<keyword id="KW-0808">Transferase</keyword>
<accession>Q2GDK4</accession>
<organism>
    <name type="scientific">Neorickettsia sennetsu (strain ATCC VR-367 / Miyayama)</name>
    <name type="common">Ehrlichia sennetsu</name>
    <dbReference type="NCBI Taxonomy" id="222891"/>
    <lineage>
        <taxon>Bacteria</taxon>
        <taxon>Pseudomonadati</taxon>
        <taxon>Pseudomonadota</taxon>
        <taxon>Alphaproteobacteria</taxon>
        <taxon>Rickettsiales</taxon>
        <taxon>Anaplasmataceae</taxon>
        <taxon>Neorickettsia</taxon>
    </lineage>
</organism>